<sequence length="166" mass="18138">MQIILLQRIVNLGKLGETVDVKPGYGRNFLIPLGKALPATKANIEKFEARRAELEAEEAKEVAVAQERADALADVNVIMRAKSGDEGKLFGSIGTRDIAEALTNSGLEVDRAEIKLPEGTLRQIGEYNVDIQLHHDVTATILVTILSEDGDNEDLDENDATDENEE</sequence>
<proteinExistence type="inferred from homology"/>
<comment type="function">
    <text evidence="1">Binds to the 23S rRNA.</text>
</comment>
<comment type="similarity">
    <text evidence="1">Belongs to the bacterial ribosomal protein bL9 family.</text>
</comment>
<gene>
    <name evidence="1" type="primary">rplI</name>
    <name type="ordered locus">Psyc_1339</name>
</gene>
<keyword id="KW-1185">Reference proteome</keyword>
<keyword id="KW-0687">Ribonucleoprotein</keyword>
<keyword id="KW-0689">Ribosomal protein</keyword>
<keyword id="KW-0694">RNA-binding</keyword>
<keyword id="KW-0699">rRNA-binding</keyword>
<accession>Q4FS19</accession>
<reference key="1">
    <citation type="journal article" date="2010" name="Appl. Environ. Microbiol.">
        <title>The genome sequence of Psychrobacter arcticus 273-4, a psychroactive Siberian permafrost bacterium, reveals mechanisms for adaptation to low-temperature growth.</title>
        <authorList>
            <person name="Ayala-del-Rio H.L."/>
            <person name="Chain P.S."/>
            <person name="Grzymski J.J."/>
            <person name="Ponder M.A."/>
            <person name="Ivanova N."/>
            <person name="Bergholz P.W."/>
            <person name="Di Bartolo G."/>
            <person name="Hauser L."/>
            <person name="Land M."/>
            <person name="Bakermans C."/>
            <person name="Rodrigues D."/>
            <person name="Klappenbach J."/>
            <person name="Zarka D."/>
            <person name="Larimer F."/>
            <person name="Richardson P."/>
            <person name="Murray A."/>
            <person name="Thomashow M."/>
            <person name="Tiedje J.M."/>
        </authorList>
    </citation>
    <scope>NUCLEOTIDE SEQUENCE [LARGE SCALE GENOMIC DNA]</scope>
    <source>
        <strain>DSM 17307 / VKM B-2377 / 273-4</strain>
    </source>
</reference>
<evidence type="ECO:0000255" key="1">
    <source>
        <dbReference type="HAMAP-Rule" id="MF_00503"/>
    </source>
</evidence>
<evidence type="ECO:0000305" key="2"/>
<feature type="chain" id="PRO_0000236575" description="Large ribosomal subunit protein bL9">
    <location>
        <begin position="1"/>
        <end position="166"/>
    </location>
</feature>
<name>RL9_PSYA2</name>
<dbReference type="EMBL" id="CP000082">
    <property type="protein sequence ID" value="AAZ19189.1"/>
    <property type="molecule type" value="Genomic_DNA"/>
</dbReference>
<dbReference type="RefSeq" id="WP_011280610.1">
    <property type="nucleotide sequence ID" value="NC_007204.1"/>
</dbReference>
<dbReference type="SMR" id="Q4FS19"/>
<dbReference type="STRING" id="259536.Psyc_1339"/>
<dbReference type="KEGG" id="par:Psyc_1339"/>
<dbReference type="eggNOG" id="COG0359">
    <property type="taxonomic scope" value="Bacteria"/>
</dbReference>
<dbReference type="HOGENOM" id="CLU_078938_4_1_6"/>
<dbReference type="OrthoDB" id="9788336at2"/>
<dbReference type="Proteomes" id="UP000000546">
    <property type="component" value="Chromosome"/>
</dbReference>
<dbReference type="GO" id="GO:1990904">
    <property type="term" value="C:ribonucleoprotein complex"/>
    <property type="evidence" value="ECO:0007669"/>
    <property type="project" value="UniProtKB-KW"/>
</dbReference>
<dbReference type="GO" id="GO:0005840">
    <property type="term" value="C:ribosome"/>
    <property type="evidence" value="ECO:0007669"/>
    <property type="project" value="UniProtKB-KW"/>
</dbReference>
<dbReference type="GO" id="GO:0019843">
    <property type="term" value="F:rRNA binding"/>
    <property type="evidence" value="ECO:0007669"/>
    <property type="project" value="UniProtKB-UniRule"/>
</dbReference>
<dbReference type="GO" id="GO:0003735">
    <property type="term" value="F:structural constituent of ribosome"/>
    <property type="evidence" value="ECO:0007669"/>
    <property type="project" value="InterPro"/>
</dbReference>
<dbReference type="GO" id="GO:0006412">
    <property type="term" value="P:translation"/>
    <property type="evidence" value="ECO:0007669"/>
    <property type="project" value="UniProtKB-UniRule"/>
</dbReference>
<dbReference type="Gene3D" id="3.10.430.100">
    <property type="entry name" value="Ribosomal protein L9, C-terminal domain"/>
    <property type="match status" value="1"/>
</dbReference>
<dbReference type="Gene3D" id="3.40.5.10">
    <property type="entry name" value="Ribosomal protein L9, N-terminal domain"/>
    <property type="match status" value="1"/>
</dbReference>
<dbReference type="HAMAP" id="MF_00503">
    <property type="entry name" value="Ribosomal_bL9"/>
    <property type="match status" value="1"/>
</dbReference>
<dbReference type="InterPro" id="IPR000244">
    <property type="entry name" value="Ribosomal_bL9"/>
</dbReference>
<dbReference type="InterPro" id="IPR009027">
    <property type="entry name" value="Ribosomal_bL9/RNase_H1_N"/>
</dbReference>
<dbReference type="InterPro" id="IPR020594">
    <property type="entry name" value="Ribosomal_bL9_bac/chp"/>
</dbReference>
<dbReference type="InterPro" id="IPR020069">
    <property type="entry name" value="Ribosomal_bL9_C"/>
</dbReference>
<dbReference type="InterPro" id="IPR036791">
    <property type="entry name" value="Ribosomal_bL9_C_sf"/>
</dbReference>
<dbReference type="InterPro" id="IPR020070">
    <property type="entry name" value="Ribosomal_bL9_N"/>
</dbReference>
<dbReference type="InterPro" id="IPR036935">
    <property type="entry name" value="Ribosomal_bL9_N_sf"/>
</dbReference>
<dbReference type="NCBIfam" id="TIGR00158">
    <property type="entry name" value="L9"/>
    <property type="match status" value="1"/>
</dbReference>
<dbReference type="PANTHER" id="PTHR21368">
    <property type="entry name" value="50S RIBOSOMAL PROTEIN L9"/>
    <property type="match status" value="1"/>
</dbReference>
<dbReference type="Pfam" id="PF03948">
    <property type="entry name" value="Ribosomal_L9_C"/>
    <property type="match status" value="1"/>
</dbReference>
<dbReference type="Pfam" id="PF01281">
    <property type="entry name" value="Ribosomal_L9_N"/>
    <property type="match status" value="1"/>
</dbReference>
<dbReference type="SUPFAM" id="SSF55658">
    <property type="entry name" value="L9 N-domain-like"/>
    <property type="match status" value="1"/>
</dbReference>
<dbReference type="SUPFAM" id="SSF55653">
    <property type="entry name" value="Ribosomal protein L9 C-domain"/>
    <property type="match status" value="1"/>
</dbReference>
<dbReference type="PROSITE" id="PS00651">
    <property type="entry name" value="RIBOSOMAL_L9"/>
    <property type="match status" value="1"/>
</dbReference>
<protein>
    <recommendedName>
        <fullName evidence="1">Large ribosomal subunit protein bL9</fullName>
    </recommendedName>
    <alternativeName>
        <fullName evidence="2">50S ribosomal protein L9</fullName>
    </alternativeName>
</protein>
<organism>
    <name type="scientific">Psychrobacter arcticus (strain DSM 17307 / VKM B-2377 / 273-4)</name>
    <dbReference type="NCBI Taxonomy" id="259536"/>
    <lineage>
        <taxon>Bacteria</taxon>
        <taxon>Pseudomonadati</taxon>
        <taxon>Pseudomonadota</taxon>
        <taxon>Gammaproteobacteria</taxon>
        <taxon>Moraxellales</taxon>
        <taxon>Moraxellaceae</taxon>
        <taxon>Psychrobacter</taxon>
    </lineage>
</organism>